<feature type="chain" id="PRO_0000064993" description="Bypass of stop codon protein 2">
    <location>
        <begin position="1"/>
        <end position="235"/>
    </location>
</feature>
<feature type="transmembrane region" description="Helical" evidence="1">
    <location>
        <begin position="68"/>
        <end position="88"/>
    </location>
</feature>
<feature type="modified residue" description="Phosphoserine" evidence="4">
    <location>
        <position position="177"/>
    </location>
</feature>
<gene>
    <name type="primary">BSC2</name>
    <name type="ordered locus">YDR275W</name>
</gene>
<reference key="1">
    <citation type="journal article" date="1997" name="Nature">
        <title>The nucleotide sequence of Saccharomyces cerevisiae chromosome IV.</title>
        <authorList>
            <person name="Jacq C."/>
            <person name="Alt-Moerbe J."/>
            <person name="Andre B."/>
            <person name="Arnold W."/>
            <person name="Bahr A."/>
            <person name="Ballesta J.P.G."/>
            <person name="Bargues M."/>
            <person name="Baron L."/>
            <person name="Becker A."/>
            <person name="Biteau N."/>
            <person name="Bloecker H."/>
            <person name="Blugeon C."/>
            <person name="Boskovic J."/>
            <person name="Brandt P."/>
            <person name="Brueckner M."/>
            <person name="Buitrago M.J."/>
            <person name="Coster F."/>
            <person name="Delaveau T."/>
            <person name="del Rey F."/>
            <person name="Dujon B."/>
            <person name="Eide L.G."/>
            <person name="Garcia-Cantalejo J.M."/>
            <person name="Goffeau A."/>
            <person name="Gomez-Peris A."/>
            <person name="Granotier C."/>
            <person name="Hanemann V."/>
            <person name="Hankeln T."/>
            <person name="Hoheisel J.D."/>
            <person name="Jaeger W."/>
            <person name="Jimenez A."/>
            <person name="Jonniaux J.-L."/>
            <person name="Kraemer C."/>
            <person name="Kuester H."/>
            <person name="Laamanen P."/>
            <person name="Legros Y."/>
            <person name="Louis E.J."/>
            <person name="Moeller-Rieker S."/>
            <person name="Monnet A."/>
            <person name="Moro M."/>
            <person name="Mueller-Auer S."/>
            <person name="Nussbaumer B."/>
            <person name="Paricio N."/>
            <person name="Paulin L."/>
            <person name="Perea J."/>
            <person name="Perez-Alonso M."/>
            <person name="Perez-Ortin J.E."/>
            <person name="Pohl T.M."/>
            <person name="Prydz H."/>
            <person name="Purnelle B."/>
            <person name="Rasmussen S.W."/>
            <person name="Remacha M.A."/>
            <person name="Revuelta J.L."/>
            <person name="Rieger M."/>
            <person name="Salom D."/>
            <person name="Saluz H.P."/>
            <person name="Saiz J.E."/>
            <person name="Saren A.-M."/>
            <person name="Schaefer M."/>
            <person name="Scharfe M."/>
            <person name="Schmidt E.R."/>
            <person name="Schneider C."/>
            <person name="Scholler P."/>
            <person name="Schwarz S."/>
            <person name="Soler-Mira A."/>
            <person name="Urrestarazu L.A."/>
            <person name="Verhasselt P."/>
            <person name="Vissers S."/>
            <person name="Voet M."/>
            <person name="Volckaert G."/>
            <person name="Wagner G."/>
            <person name="Wambutt R."/>
            <person name="Wedler E."/>
            <person name="Wedler H."/>
            <person name="Woelfl S."/>
            <person name="Harris D.E."/>
            <person name="Bowman S."/>
            <person name="Brown D."/>
            <person name="Churcher C.M."/>
            <person name="Connor R."/>
            <person name="Dedman K."/>
            <person name="Gentles S."/>
            <person name="Hamlin N."/>
            <person name="Hunt S."/>
            <person name="Jones L."/>
            <person name="McDonald S."/>
            <person name="Murphy L.D."/>
            <person name="Niblett D."/>
            <person name="Odell C."/>
            <person name="Oliver K."/>
            <person name="Rajandream M.A."/>
            <person name="Richards C."/>
            <person name="Shore L."/>
            <person name="Walsh S.V."/>
            <person name="Barrell B.G."/>
            <person name="Dietrich F.S."/>
            <person name="Mulligan J.T."/>
            <person name="Allen E."/>
            <person name="Araujo R."/>
            <person name="Aviles E."/>
            <person name="Berno A."/>
            <person name="Carpenter J."/>
            <person name="Chen E."/>
            <person name="Cherry J.M."/>
            <person name="Chung E."/>
            <person name="Duncan M."/>
            <person name="Hunicke-Smith S."/>
            <person name="Hyman R.W."/>
            <person name="Komp C."/>
            <person name="Lashkari D."/>
            <person name="Lew H."/>
            <person name="Lin D."/>
            <person name="Mosedale D."/>
            <person name="Nakahara K."/>
            <person name="Namath A."/>
            <person name="Oefner P."/>
            <person name="Oh C."/>
            <person name="Petel F.X."/>
            <person name="Roberts D."/>
            <person name="Schramm S."/>
            <person name="Schroeder M."/>
            <person name="Shogren T."/>
            <person name="Shroff N."/>
            <person name="Winant A."/>
            <person name="Yelton M.A."/>
            <person name="Botstein D."/>
            <person name="Davis R.W."/>
            <person name="Johnston M."/>
            <person name="Andrews S."/>
            <person name="Brinkman R."/>
            <person name="Cooper J."/>
            <person name="Ding H."/>
            <person name="Du Z."/>
            <person name="Favello A."/>
            <person name="Fulton L."/>
            <person name="Gattung S."/>
            <person name="Greco T."/>
            <person name="Hallsworth K."/>
            <person name="Hawkins J."/>
            <person name="Hillier L.W."/>
            <person name="Jier M."/>
            <person name="Johnson D."/>
            <person name="Johnston L."/>
            <person name="Kirsten J."/>
            <person name="Kucaba T."/>
            <person name="Langston Y."/>
            <person name="Latreille P."/>
            <person name="Le T."/>
            <person name="Mardis E."/>
            <person name="Menezes S."/>
            <person name="Miller N."/>
            <person name="Nhan M."/>
            <person name="Pauley A."/>
            <person name="Peluso D."/>
            <person name="Rifkin L."/>
            <person name="Riles L."/>
            <person name="Taich A."/>
            <person name="Trevaskis E."/>
            <person name="Vignati D."/>
            <person name="Wilcox L."/>
            <person name="Wohldman P."/>
            <person name="Vaudin M."/>
            <person name="Wilson R."/>
            <person name="Waterston R."/>
            <person name="Albermann K."/>
            <person name="Hani J."/>
            <person name="Heumann K."/>
            <person name="Kleine K."/>
            <person name="Mewes H.-W."/>
            <person name="Zollner A."/>
            <person name="Zaccaria P."/>
        </authorList>
    </citation>
    <scope>NUCLEOTIDE SEQUENCE [LARGE SCALE GENOMIC DNA]</scope>
    <source>
        <strain>ATCC 204508 / S288c</strain>
    </source>
</reference>
<reference key="2">
    <citation type="journal article" date="2014" name="G3 (Bethesda)">
        <title>The reference genome sequence of Saccharomyces cerevisiae: Then and now.</title>
        <authorList>
            <person name="Engel S.R."/>
            <person name="Dietrich F.S."/>
            <person name="Fisk D.G."/>
            <person name="Binkley G."/>
            <person name="Balakrishnan R."/>
            <person name="Costanzo M.C."/>
            <person name="Dwight S.S."/>
            <person name="Hitz B.C."/>
            <person name="Karra K."/>
            <person name="Nash R.S."/>
            <person name="Weng S."/>
            <person name="Wong E.D."/>
            <person name="Lloyd P."/>
            <person name="Skrzypek M.S."/>
            <person name="Miyasato S.R."/>
            <person name="Simison M."/>
            <person name="Cherry J.M."/>
        </authorList>
    </citation>
    <scope>GENOME REANNOTATION</scope>
    <source>
        <strain>ATCC 204508 / S288c</strain>
    </source>
</reference>
<reference key="3">
    <citation type="journal article" date="2007" name="Genome Res.">
        <title>Approaching a complete repository of sequence-verified protein-encoding clones for Saccharomyces cerevisiae.</title>
        <authorList>
            <person name="Hu Y."/>
            <person name="Rolfs A."/>
            <person name="Bhullar B."/>
            <person name="Murthy T.V.S."/>
            <person name="Zhu C."/>
            <person name="Berger M.F."/>
            <person name="Camargo A.A."/>
            <person name="Kelley F."/>
            <person name="McCarron S."/>
            <person name="Jepson D."/>
            <person name="Richardson A."/>
            <person name="Raphael J."/>
            <person name="Moreira D."/>
            <person name="Taycher E."/>
            <person name="Zuo D."/>
            <person name="Mohr S."/>
            <person name="Kane M.F."/>
            <person name="Williamson J."/>
            <person name="Simpson A.J.G."/>
            <person name="Bulyk M.L."/>
            <person name="Harlow E."/>
            <person name="Marsischky G."/>
            <person name="Kolodner R.D."/>
            <person name="LaBaer J."/>
        </authorList>
    </citation>
    <scope>NUCLEOTIDE SEQUENCE [GENOMIC DNA]</scope>
    <source>
        <strain>ATCC 204508 / S288c</strain>
    </source>
</reference>
<reference key="4">
    <citation type="journal article" date="2003" name="Nucleic Acids Res.">
        <title>Identification of stop codon readthrough genes in Saccharomyces cerevisiae.</title>
        <authorList>
            <person name="Namy O."/>
            <person name="Duchateau-Nguyen G."/>
            <person name="Hatin I."/>
            <person name="Hermann-Le Denmat S."/>
            <person name="Termier M."/>
            <person name="Rousset J.-P."/>
        </authorList>
    </citation>
    <scope>GENE NAME</scope>
</reference>
<reference key="5">
    <citation type="journal article" date="2003" name="Nature">
        <title>Global analysis of protein localization in budding yeast.</title>
        <authorList>
            <person name="Huh W.-K."/>
            <person name="Falvo J.V."/>
            <person name="Gerke L.C."/>
            <person name="Carroll A.S."/>
            <person name="Howson R.W."/>
            <person name="Weissman J.S."/>
            <person name="O'Shea E.K."/>
        </authorList>
    </citation>
    <scope>SUBCELLULAR LOCATION [LARGE SCALE ANALYSIS]</scope>
</reference>
<reference key="6">
    <citation type="journal article" date="2003" name="Nature">
        <title>Global analysis of protein expression in yeast.</title>
        <authorList>
            <person name="Ghaemmaghami S."/>
            <person name="Huh W.-K."/>
            <person name="Bower K."/>
            <person name="Howson R.W."/>
            <person name="Belle A."/>
            <person name="Dephoure N."/>
            <person name="O'Shea E.K."/>
            <person name="Weissman J.S."/>
        </authorList>
    </citation>
    <scope>LEVEL OF PROTEIN EXPRESSION [LARGE SCALE ANALYSIS]</scope>
</reference>
<reference key="7">
    <citation type="journal article" date="2008" name="Mol. Cell. Proteomics">
        <title>A multidimensional chromatography technology for in-depth phosphoproteome analysis.</title>
        <authorList>
            <person name="Albuquerque C.P."/>
            <person name="Smolka M.B."/>
            <person name="Payne S.H."/>
            <person name="Bafna V."/>
            <person name="Eng J."/>
            <person name="Zhou H."/>
        </authorList>
    </citation>
    <scope>IDENTIFICATION BY MASS SPECTROMETRY [LARGE SCALE ANALYSIS]</scope>
</reference>
<reference key="8">
    <citation type="journal article" date="2009" name="Science">
        <title>Global analysis of Cdk1 substrate phosphorylation sites provides insights into evolution.</title>
        <authorList>
            <person name="Holt L.J."/>
            <person name="Tuch B.B."/>
            <person name="Villen J."/>
            <person name="Johnson A.D."/>
            <person name="Gygi S.P."/>
            <person name="Morgan D.O."/>
        </authorList>
    </citation>
    <scope>PHOSPHORYLATION [LARGE SCALE ANALYSIS] AT SER-177</scope>
    <scope>IDENTIFICATION BY MASS SPECTROMETRY [LARGE SCALE ANALYSIS]</scope>
</reference>
<keyword id="KW-0551">Lipid droplet</keyword>
<keyword id="KW-0472">Membrane</keyword>
<keyword id="KW-0597">Phosphoprotein</keyword>
<keyword id="KW-1185">Reference proteome</keyword>
<keyword id="KW-0812">Transmembrane</keyword>
<keyword id="KW-1133">Transmembrane helix</keyword>
<sequence>MFFFPKLRKLIGSTVIDHDTKNSSGKEEIMSNSRLALVIINHAFDKVLSLTWHCGILSEIRSGLMLMFGIFQLMCSLGVIVLLLPIIILDAIDLFLYMCRLLDYGCKLFHYNRSSLPVADGKEKTSGPISGKEEIVIDEEIINMLNESSESLINHTTAGLEYDISSGSVNKSRRLNSTSTVTFVKQNKLVNERREDAYYEEEDDDFLSNPNYDKISLIEKSFTSRFEVACEQKAA</sequence>
<protein>
    <recommendedName>
        <fullName>Bypass of stop codon protein 2</fullName>
    </recommendedName>
</protein>
<evidence type="ECO:0000255" key="1"/>
<evidence type="ECO:0000269" key="2">
    <source>
    </source>
</evidence>
<evidence type="ECO:0000269" key="3">
    <source>
    </source>
</evidence>
<evidence type="ECO:0007744" key="4">
    <source>
    </source>
</evidence>
<proteinExistence type="evidence at protein level"/>
<dbReference type="EMBL" id="U51030">
    <property type="protein sequence ID" value="AAB64448.1"/>
    <property type="molecule type" value="Genomic_DNA"/>
</dbReference>
<dbReference type="EMBL" id="AY557736">
    <property type="protein sequence ID" value="AAS56062.1"/>
    <property type="molecule type" value="Genomic_DNA"/>
</dbReference>
<dbReference type="EMBL" id="BK006938">
    <property type="protein sequence ID" value="DAA12116.1"/>
    <property type="molecule type" value="Genomic_DNA"/>
</dbReference>
<dbReference type="PIR" id="S70132">
    <property type="entry name" value="S70132"/>
</dbReference>
<dbReference type="RefSeq" id="NP_010561.1">
    <property type="nucleotide sequence ID" value="NM_001180583.1"/>
</dbReference>
<dbReference type="SMR" id="Q05611"/>
<dbReference type="BioGRID" id="32328">
    <property type="interactions" value="105"/>
</dbReference>
<dbReference type="DIP" id="DIP-5218N"/>
<dbReference type="FunCoup" id="Q05611">
    <property type="interactions" value="63"/>
</dbReference>
<dbReference type="IntAct" id="Q05611">
    <property type="interactions" value="5"/>
</dbReference>
<dbReference type="MINT" id="Q05611"/>
<dbReference type="STRING" id="4932.YDR275W"/>
<dbReference type="iPTMnet" id="Q05611"/>
<dbReference type="PaxDb" id="4932-YDR275W"/>
<dbReference type="PeptideAtlas" id="Q05611"/>
<dbReference type="EnsemblFungi" id="YDR275W_mRNA">
    <property type="protein sequence ID" value="YDR275W"/>
    <property type="gene ID" value="YDR275W"/>
</dbReference>
<dbReference type="GeneID" id="851868"/>
<dbReference type="KEGG" id="sce:YDR275W"/>
<dbReference type="AGR" id="SGD:S000002683"/>
<dbReference type="SGD" id="S000002683">
    <property type="gene designation" value="BSC2"/>
</dbReference>
<dbReference type="VEuPathDB" id="FungiDB:YDR275W"/>
<dbReference type="HOGENOM" id="CLU_1332608_0_0_1"/>
<dbReference type="InParanoid" id="Q05611"/>
<dbReference type="OrthoDB" id="4061503at2759"/>
<dbReference type="BioCyc" id="YEAST:G3O-29841-MONOMER"/>
<dbReference type="BioGRID-ORCS" id="851868">
    <property type="hits" value="1 hit in 10 CRISPR screens"/>
</dbReference>
<dbReference type="PRO" id="PR:Q05611"/>
<dbReference type="Proteomes" id="UP000002311">
    <property type="component" value="Chromosome IV"/>
</dbReference>
<dbReference type="RNAct" id="Q05611">
    <property type="molecule type" value="protein"/>
</dbReference>
<dbReference type="GO" id="GO:0005811">
    <property type="term" value="C:lipid droplet"/>
    <property type="evidence" value="ECO:0000314"/>
    <property type="project" value="SGD"/>
</dbReference>
<dbReference type="GO" id="GO:0016020">
    <property type="term" value="C:membrane"/>
    <property type="evidence" value="ECO:0007669"/>
    <property type="project" value="UniProtKB-SubCell"/>
</dbReference>
<dbReference type="GO" id="GO:0016042">
    <property type="term" value="P:lipid catabolic process"/>
    <property type="evidence" value="ECO:0000314"/>
    <property type="project" value="SGD"/>
</dbReference>
<comment type="subcellular location">
    <subcellularLocation>
        <location evidence="2">Lipid droplet</location>
    </subcellularLocation>
    <subcellularLocation>
        <location evidence="2">Membrane</location>
        <topology evidence="2">Single-pass membrane protein</topology>
    </subcellularLocation>
    <text>Punctate lipid particles.</text>
</comment>
<comment type="miscellaneous">
    <text evidence="3">Present with 922 molecules/cell in log phase SD medium.</text>
</comment>
<comment type="miscellaneous">
    <text>Open reading frame exhibits genomic organization compatible with a translational readthrough-dependent mode of expression.</text>
</comment>
<organism>
    <name type="scientific">Saccharomyces cerevisiae (strain ATCC 204508 / S288c)</name>
    <name type="common">Baker's yeast</name>
    <dbReference type="NCBI Taxonomy" id="559292"/>
    <lineage>
        <taxon>Eukaryota</taxon>
        <taxon>Fungi</taxon>
        <taxon>Dikarya</taxon>
        <taxon>Ascomycota</taxon>
        <taxon>Saccharomycotina</taxon>
        <taxon>Saccharomycetes</taxon>
        <taxon>Saccharomycetales</taxon>
        <taxon>Saccharomycetaceae</taxon>
        <taxon>Saccharomyces</taxon>
    </lineage>
</organism>
<accession>Q05611</accession>
<accession>D6VSQ6</accession>
<name>BSC2_YEAST</name>